<organism>
    <name type="scientific">Talaromyces marneffei (strain ATCC 18224 / CBS 334.59 / QM 7333)</name>
    <name type="common">Penicillium marneffei</name>
    <dbReference type="NCBI Taxonomy" id="441960"/>
    <lineage>
        <taxon>Eukaryota</taxon>
        <taxon>Fungi</taxon>
        <taxon>Dikarya</taxon>
        <taxon>Ascomycota</taxon>
        <taxon>Pezizomycotina</taxon>
        <taxon>Eurotiomycetes</taxon>
        <taxon>Eurotiomycetidae</taxon>
        <taxon>Eurotiales</taxon>
        <taxon>Trichocomaceae</taxon>
        <taxon>Talaromyces</taxon>
        <taxon>Talaromyces sect. Talaromyces</taxon>
    </lineage>
</organism>
<name>MAP21_TALMQ</name>
<reference key="1">
    <citation type="journal article" date="2015" name="Genome Announc.">
        <title>Genome sequence of the AIDS-associated pathogen Penicillium marneffei (ATCC18224) and its near taxonomic relative Talaromyces stipitatus (ATCC10500).</title>
        <authorList>
            <person name="Nierman W.C."/>
            <person name="Fedorova-Abrams N.D."/>
            <person name="Andrianopoulos A."/>
        </authorList>
    </citation>
    <scope>NUCLEOTIDE SEQUENCE [LARGE SCALE GENOMIC DNA]</scope>
    <source>
        <strain>ATCC 18224 / CBS 334.59 / QM 7333</strain>
    </source>
</reference>
<dbReference type="EC" id="3.4.11.18" evidence="1"/>
<dbReference type="EMBL" id="DS995899">
    <property type="protein sequence ID" value="EEA27899.1"/>
    <property type="molecule type" value="Genomic_DNA"/>
</dbReference>
<dbReference type="RefSeq" id="XP_002144414.1">
    <property type="nucleotide sequence ID" value="XM_002144378.1"/>
</dbReference>
<dbReference type="SMR" id="B6Q1N3"/>
<dbReference type="STRING" id="441960.B6Q1N3"/>
<dbReference type="VEuPathDB" id="FungiDB:PMAA_027380"/>
<dbReference type="HOGENOM" id="CLU_015857_7_1_1"/>
<dbReference type="OrthoDB" id="5688at28568"/>
<dbReference type="PhylomeDB" id="B6Q1N3"/>
<dbReference type="Proteomes" id="UP000001294">
    <property type="component" value="Unassembled WGS sequence"/>
</dbReference>
<dbReference type="GO" id="GO:0005737">
    <property type="term" value="C:cytoplasm"/>
    <property type="evidence" value="ECO:0007669"/>
    <property type="project" value="UniProtKB-SubCell"/>
</dbReference>
<dbReference type="GO" id="GO:0004239">
    <property type="term" value="F:initiator methionyl aminopeptidase activity"/>
    <property type="evidence" value="ECO:0007669"/>
    <property type="project" value="UniProtKB-UniRule"/>
</dbReference>
<dbReference type="GO" id="GO:0046872">
    <property type="term" value="F:metal ion binding"/>
    <property type="evidence" value="ECO:0007669"/>
    <property type="project" value="UniProtKB-UniRule"/>
</dbReference>
<dbReference type="GO" id="GO:0070006">
    <property type="term" value="F:metalloaminopeptidase activity"/>
    <property type="evidence" value="ECO:0007669"/>
    <property type="project" value="UniProtKB-UniRule"/>
</dbReference>
<dbReference type="GO" id="GO:0006508">
    <property type="term" value="P:proteolysis"/>
    <property type="evidence" value="ECO:0007669"/>
    <property type="project" value="UniProtKB-KW"/>
</dbReference>
<dbReference type="CDD" id="cd01088">
    <property type="entry name" value="MetAP2"/>
    <property type="match status" value="1"/>
</dbReference>
<dbReference type="Gene3D" id="3.90.230.10">
    <property type="entry name" value="Creatinase/methionine aminopeptidase superfamily"/>
    <property type="match status" value="1"/>
</dbReference>
<dbReference type="Gene3D" id="1.10.10.10">
    <property type="entry name" value="Winged helix-like DNA-binding domain superfamily/Winged helix DNA-binding domain"/>
    <property type="match status" value="1"/>
</dbReference>
<dbReference type="HAMAP" id="MF_03175">
    <property type="entry name" value="MetAP_2_euk"/>
    <property type="match status" value="1"/>
</dbReference>
<dbReference type="InterPro" id="IPR036005">
    <property type="entry name" value="Creatinase/aminopeptidase-like"/>
</dbReference>
<dbReference type="InterPro" id="IPR050247">
    <property type="entry name" value="Met_Aminopeptidase_Type2"/>
</dbReference>
<dbReference type="InterPro" id="IPR000994">
    <property type="entry name" value="Pept_M24"/>
</dbReference>
<dbReference type="InterPro" id="IPR001714">
    <property type="entry name" value="Pept_M24_MAP"/>
</dbReference>
<dbReference type="InterPro" id="IPR002468">
    <property type="entry name" value="Pept_M24A_MAP2"/>
</dbReference>
<dbReference type="InterPro" id="IPR018349">
    <property type="entry name" value="Pept_M24A_MAP2_BS"/>
</dbReference>
<dbReference type="InterPro" id="IPR036388">
    <property type="entry name" value="WH-like_DNA-bd_sf"/>
</dbReference>
<dbReference type="InterPro" id="IPR036390">
    <property type="entry name" value="WH_DNA-bd_sf"/>
</dbReference>
<dbReference type="NCBIfam" id="TIGR00501">
    <property type="entry name" value="met_pdase_II"/>
    <property type="match status" value="1"/>
</dbReference>
<dbReference type="PANTHER" id="PTHR45777">
    <property type="entry name" value="METHIONINE AMINOPEPTIDASE 2"/>
    <property type="match status" value="1"/>
</dbReference>
<dbReference type="PANTHER" id="PTHR45777:SF2">
    <property type="entry name" value="METHIONINE AMINOPEPTIDASE 2"/>
    <property type="match status" value="1"/>
</dbReference>
<dbReference type="Pfam" id="PF00557">
    <property type="entry name" value="Peptidase_M24"/>
    <property type="match status" value="1"/>
</dbReference>
<dbReference type="PRINTS" id="PR00599">
    <property type="entry name" value="MAPEPTIDASE"/>
</dbReference>
<dbReference type="SUPFAM" id="SSF55920">
    <property type="entry name" value="Creatinase/aminopeptidase"/>
    <property type="match status" value="1"/>
</dbReference>
<dbReference type="SUPFAM" id="SSF46785">
    <property type="entry name" value="Winged helix' DNA-binding domain"/>
    <property type="match status" value="1"/>
</dbReference>
<dbReference type="PROSITE" id="PS01202">
    <property type="entry name" value="MAP_2"/>
    <property type="match status" value="1"/>
</dbReference>
<feature type="chain" id="PRO_0000407611" description="Methionine aminopeptidase 2-1">
    <location>
        <begin position="1"/>
        <end position="442"/>
    </location>
</feature>
<feature type="region of interest" description="Disordered" evidence="2">
    <location>
        <begin position="1"/>
        <end position="92"/>
    </location>
</feature>
<feature type="compositionally biased region" description="Polar residues" evidence="2">
    <location>
        <begin position="15"/>
        <end position="25"/>
    </location>
</feature>
<feature type="compositionally biased region" description="Acidic residues" evidence="2">
    <location>
        <begin position="30"/>
        <end position="47"/>
    </location>
</feature>
<feature type="compositionally biased region" description="Basic residues" evidence="2">
    <location>
        <begin position="56"/>
        <end position="72"/>
    </location>
</feature>
<feature type="binding site" evidence="1">
    <location>
        <position position="195"/>
    </location>
    <ligand>
        <name>substrate</name>
    </ligand>
</feature>
<feature type="binding site" evidence="1">
    <location>
        <position position="215"/>
    </location>
    <ligand>
        <name>a divalent metal cation</name>
        <dbReference type="ChEBI" id="CHEBI:60240"/>
        <label>1</label>
    </ligand>
</feature>
<feature type="binding site" evidence="1">
    <location>
        <position position="226"/>
    </location>
    <ligand>
        <name>a divalent metal cation</name>
        <dbReference type="ChEBI" id="CHEBI:60240"/>
        <label>1</label>
    </ligand>
</feature>
<feature type="binding site" evidence="1">
    <location>
        <position position="226"/>
    </location>
    <ligand>
        <name>a divalent metal cation</name>
        <dbReference type="ChEBI" id="CHEBI:60240"/>
        <label>2</label>
        <note>catalytic</note>
    </ligand>
</feature>
<feature type="binding site" evidence="1">
    <location>
        <position position="295"/>
    </location>
    <ligand>
        <name>a divalent metal cation</name>
        <dbReference type="ChEBI" id="CHEBI:60240"/>
        <label>2</label>
        <note>catalytic</note>
    </ligand>
</feature>
<feature type="binding site" evidence="1">
    <location>
        <position position="303"/>
    </location>
    <ligand>
        <name>substrate</name>
    </ligand>
</feature>
<feature type="binding site" evidence="1">
    <location>
        <position position="328"/>
    </location>
    <ligand>
        <name>a divalent metal cation</name>
        <dbReference type="ChEBI" id="CHEBI:60240"/>
        <label>2</label>
        <note>catalytic</note>
    </ligand>
</feature>
<feature type="binding site" evidence="1">
    <location>
        <position position="423"/>
    </location>
    <ligand>
        <name>a divalent metal cation</name>
        <dbReference type="ChEBI" id="CHEBI:60240"/>
        <label>1</label>
    </ligand>
</feature>
<feature type="binding site" evidence="1">
    <location>
        <position position="423"/>
    </location>
    <ligand>
        <name>a divalent metal cation</name>
        <dbReference type="ChEBI" id="CHEBI:60240"/>
        <label>2</label>
        <note>catalytic</note>
    </ligand>
</feature>
<sequence length="442" mass="48696">MAAQASEELEKLKLNGQNGHAQEQVSAADEAADNDDSEDDEKEEEGGAEGAATGAAKKKKKRKPKKKKKGGAKKQSSPPRVPISELFPNNQYPEGEIVEYKDENNYRTTNEEKRYLDRMNNDFLQEYRHGAEVHRQVRQYAQKNIKPGQTLTEIAEGIEDAVRALTGHQGLEEGDNIKGGMGFPCGLSINHCAAHYTPNAGNKMVLQQGDVMKVDFGAHINGRIVDSAFTMTFDPVYDNLLAAVKDATNTGIREAGIDVRMSDIGAAIQEAMESYEVEINGTTYPVKAIRNLNGHNIEQHIIHGGKSVPIVKGGDQTKMEEGEVFAIETFGSTGKGYVRDDMETSHYAKVSNAPSVSLRLSSAKNLLNVINKNFGTLPFCRRYLDRLGQDKYLLGLNNLVSAGIIQDYPPLCDIKGSYTAQYEHTIVLRPTVKEIISRGDDY</sequence>
<keyword id="KW-0031">Aminopeptidase</keyword>
<keyword id="KW-0963">Cytoplasm</keyword>
<keyword id="KW-0378">Hydrolase</keyword>
<keyword id="KW-0479">Metal-binding</keyword>
<keyword id="KW-0645">Protease</keyword>
<keyword id="KW-1185">Reference proteome</keyword>
<gene>
    <name type="ORF">PMAA_027380</name>
</gene>
<accession>B6Q1N3</accession>
<protein>
    <recommendedName>
        <fullName evidence="1">Methionine aminopeptidase 2-1</fullName>
        <shortName evidence="1">MAP 2-1</shortName>
        <shortName evidence="1">MetAP 2-1</shortName>
        <ecNumber evidence="1">3.4.11.18</ecNumber>
    </recommendedName>
    <alternativeName>
        <fullName evidence="1">Peptidase M</fullName>
    </alternativeName>
</protein>
<evidence type="ECO:0000255" key="1">
    <source>
        <dbReference type="HAMAP-Rule" id="MF_03175"/>
    </source>
</evidence>
<evidence type="ECO:0000256" key="2">
    <source>
        <dbReference type="SAM" id="MobiDB-lite"/>
    </source>
</evidence>
<comment type="function">
    <text evidence="1">Cotranslationally removes the N-terminal methionine from nascent proteins. The N-terminal methionine is often cleaved when the second residue in the primary sequence is small and uncharged (Met-Ala-, Cys, Gly, Pro, Ser, Thr, or Val).</text>
</comment>
<comment type="catalytic activity">
    <reaction evidence="1">
        <text>Release of N-terminal amino acids, preferentially methionine, from peptides and arylamides.</text>
        <dbReference type="EC" id="3.4.11.18"/>
    </reaction>
</comment>
<comment type="cofactor">
    <cofactor evidence="1">
        <name>Co(2+)</name>
        <dbReference type="ChEBI" id="CHEBI:48828"/>
    </cofactor>
    <cofactor evidence="1">
        <name>Zn(2+)</name>
        <dbReference type="ChEBI" id="CHEBI:29105"/>
    </cofactor>
    <cofactor evidence="1">
        <name>Mn(2+)</name>
        <dbReference type="ChEBI" id="CHEBI:29035"/>
    </cofactor>
    <cofactor evidence="1">
        <name>Fe(2+)</name>
        <dbReference type="ChEBI" id="CHEBI:29033"/>
    </cofactor>
    <text evidence="1">Binds 2 divalent metal cations per subunit. Has a high-affinity and a low affinity metal-binding site. The true nature of the physiological cofactor is under debate. The enzyme is active with cobalt, zinc, manganese or divalent iron ions. Most likely, methionine aminopeptidases function as mononuclear Fe(2+)-metalloproteases under physiological conditions, and the catalytically relevant metal-binding site has been assigned to the histidine-containing high-affinity site.</text>
</comment>
<comment type="subcellular location">
    <subcellularLocation>
        <location evidence="1">Cytoplasm</location>
    </subcellularLocation>
</comment>
<comment type="similarity">
    <text evidence="1">Belongs to the peptidase M24A family. Methionine aminopeptidase eukaryotic type 2 subfamily.</text>
</comment>
<proteinExistence type="inferred from homology"/>